<gene>
    <name evidence="1" type="primary">hemL</name>
    <name type="ordered locus">Daud_1340</name>
</gene>
<organism>
    <name type="scientific">Desulforudis audaxviator (strain MP104C)</name>
    <dbReference type="NCBI Taxonomy" id="477974"/>
    <lineage>
        <taxon>Bacteria</taxon>
        <taxon>Bacillati</taxon>
        <taxon>Bacillota</taxon>
        <taxon>Clostridia</taxon>
        <taxon>Thermoanaerobacterales</taxon>
        <taxon>Candidatus Desulforudaceae</taxon>
        <taxon>Candidatus Desulforudis</taxon>
    </lineage>
</organism>
<reference key="1">
    <citation type="submission" date="2007-10" db="EMBL/GenBank/DDBJ databases">
        <title>Complete sequence of chromosome of Desulforudis audaxviator MP104C.</title>
        <authorList>
            <person name="Copeland A."/>
            <person name="Lucas S."/>
            <person name="Lapidus A."/>
            <person name="Barry K."/>
            <person name="Glavina del Rio T."/>
            <person name="Dalin E."/>
            <person name="Tice H."/>
            <person name="Bruce D."/>
            <person name="Pitluck S."/>
            <person name="Lowry S.R."/>
            <person name="Larimer F."/>
            <person name="Land M.L."/>
            <person name="Hauser L."/>
            <person name="Kyrpides N."/>
            <person name="Ivanova N.N."/>
            <person name="Richardson P."/>
        </authorList>
    </citation>
    <scope>NUCLEOTIDE SEQUENCE [LARGE SCALE GENOMIC DNA]</scope>
    <source>
        <strain>MP104C</strain>
    </source>
</reference>
<sequence>MTRDHFRSAQMFAEAQKYMPGGVNSPVRAFKAVGGDPIFFLRGEGALLFDVDGNRYIDYVASWGPLILGHAHPLVVRAVKECAEFGTSFGAPNELEIELARLLVEALPSVEMVRLVNSGTEATMSALRLARAYTKREKIVKFEGCYHGHADALLVKAGSGALTLGVPTSPGVPEDTARNTVVAGFNDLEGLKELFARLGEEIAAVIVEPVPANMGLVLPRPGFLKGLRDLTAAYGALLVFDEVITGFRLSYGGAQNLYGVQPDLTCLGKIIGGGLPVGAYGGRRDIMEQVAPSGPVYQAGTLSGNPLAMAAGISTIKALAEPGVYEALESKTLRLARGLEEAAARAGAEVYITQTGSMLCVFFQPGPVTDFAGALRSDTARYSRYFQALLERGVYIAPAQFEALFLSTAHTDEHIDRTLEACEEAFRFAFSG</sequence>
<keyword id="KW-0963">Cytoplasm</keyword>
<keyword id="KW-0413">Isomerase</keyword>
<keyword id="KW-0627">Porphyrin biosynthesis</keyword>
<keyword id="KW-0663">Pyridoxal phosphate</keyword>
<keyword id="KW-1185">Reference proteome</keyword>
<proteinExistence type="inferred from homology"/>
<accession>B1I4L1</accession>
<name>GSA_DESAP</name>
<dbReference type="EC" id="5.4.3.8" evidence="1"/>
<dbReference type="EMBL" id="CP000860">
    <property type="protein sequence ID" value="ACA59849.1"/>
    <property type="molecule type" value="Genomic_DNA"/>
</dbReference>
<dbReference type="RefSeq" id="WP_012302434.1">
    <property type="nucleotide sequence ID" value="NC_010424.1"/>
</dbReference>
<dbReference type="SMR" id="B1I4L1"/>
<dbReference type="STRING" id="477974.Daud_1340"/>
<dbReference type="KEGG" id="dau:Daud_1340"/>
<dbReference type="eggNOG" id="COG0001">
    <property type="taxonomic scope" value="Bacteria"/>
</dbReference>
<dbReference type="HOGENOM" id="CLU_016922_1_5_9"/>
<dbReference type="OrthoDB" id="9807885at2"/>
<dbReference type="UniPathway" id="UPA00251">
    <property type="reaction ID" value="UER00317"/>
</dbReference>
<dbReference type="Proteomes" id="UP000008544">
    <property type="component" value="Chromosome"/>
</dbReference>
<dbReference type="GO" id="GO:0005737">
    <property type="term" value="C:cytoplasm"/>
    <property type="evidence" value="ECO:0007669"/>
    <property type="project" value="UniProtKB-SubCell"/>
</dbReference>
<dbReference type="GO" id="GO:0042286">
    <property type="term" value="F:glutamate-1-semialdehyde 2,1-aminomutase activity"/>
    <property type="evidence" value="ECO:0007669"/>
    <property type="project" value="UniProtKB-UniRule"/>
</dbReference>
<dbReference type="GO" id="GO:0030170">
    <property type="term" value="F:pyridoxal phosphate binding"/>
    <property type="evidence" value="ECO:0007669"/>
    <property type="project" value="InterPro"/>
</dbReference>
<dbReference type="GO" id="GO:0008483">
    <property type="term" value="F:transaminase activity"/>
    <property type="evidence" value="ECO:0007669"/>
    <property type="project" value="InterPro"/>
</dbReference>
<dbReference type="GO" id="GO:0006782">
    <property type="term" value="P:protoporphyrinogen IX biosynthetic process"/>
    <property type="evidence" value="ECO:0007669"/>
    <property type="project" value="UniProtKB-UniRule"/>
</dbReference>
<dbReference type="CDD" id="cd00610">
    <property type="entry name" value="OAT_like"/>
    <property type="match status" value="1"/>
</dbReference>
<dbReference type="FunFam" id="3.40.640.10:FF:000021">
    <property type="entry name" value="Glutamate-1-semialdehyde 2,1-aminomutase"/>
    <property type="match status" value="1"/>
</dbReference>
<dbReference type="Gene3D" id="3.90.1150.10">
    <property type="entry name" value="Aspartate Aminotransferase, domain 1"/>
    <property type="match status" value="1"/>
</dbReference>
<dbReference type="Gene3D" id="3.40.640.10">
    <property type="entry name" value="Type I PLP-dependent aspartate aminotransferase-like (Major domain)"/>
    <property type="match status" value="1"/>
</dbReference>
<dbReference type="HAMAP" id="MF_00375">
    <property type="entry name" value="HemL_aminotrans_3"/>
    <property type="match status" value="1"/>
</dbReference>
<dbReference type="InterPro" id="IPR004639">
    <property type="entry name" value="4pyrrol_synth_GluAld_NH2Trfase"/>
</dbReference>
<dbReference type="InterPro" id="IPR005814">
    <property type="entry name" value="Aminotrans_3"/>
</dbReference>
<dbReference type="InterPro" id="IPR049704">
    <property type="entry name" value="Aminotrans_3_PPA_site"/>
</dbReference>
<dbReference type="InterPro" id="IPR015424">
    <property type="entry name" value="PyrdxlP-dep_Trfase"/>
</dbReference>
<dbReference type="InterPro" id="IPR015421">
    <property type="entry name" value="PyrdxlP-dep_Trfase_major"/>
</dbReference>
<dbReference type="InterPro" id="IPR015422">
    <property type="entry name" value="PyrdxlP-dep_Trfase_small"/>
</dbReference>
<dbReference type="NCBIfam" id="TIGR00713">
    <property type="entry name" value="hemL"/>
    <property type="match status" value="1"/>
</dbReference>
<dbReference type="NCBIfam" id="NF000818">
    <property type="entry name" value="PRK00062.1"/>
    <property type="match status" value="1"/>
</dbReference>
<dbReference type="PANTHER" id="PTHR43713">
    <property type="entry name" value="GLUTAMATE-1-SEMIALDEHYDE 2,1-AMINOMUTASE"/>
    <property type="match status" value="1"/>
</dbReference>
<dbReference type="PANTHER" id="PTHR43713:SF3">
    <property type="entry name" value="GLUTAMATE-1-SEMIALDEHYDE 2,1-AMINOMUTASE 1, CHLOROPLASTIC-RELATED"/>
    <property type="match status" value="1"/>
</dbReference>
<dbReference type="Pfam" id="PF00202">
    <property type="entry name" value="Aminotran_3"/>
    <property type="match status" value="1"/>
</dbReference>
<dbReference type="SUPFAM" id="SSF53383">
    <property type="entry name" value="PLP-dependent transferases"/>
    <property type="match status" value="1"/>
</dbReference>
<dbReference type="PROSITE" id="PS00600">
    <property type="entry name" value="AA_TRANSFER_CLASS_3"/>
    <property type="match status" value="1"/>
</dbReference>
<feature type="chain" id="PRO_0000382309" description="Glutamate-1-semialdehyde 2,1-aminomutase">
    <location>
        <begin position="1"/>
        <end position="432"/>
    </location>
</feature>
<feature type="modified residue" description="N6-(pyridoxal phosphate)lysine" evidence="1">
    <location>
        <position position="269"/>
    </location>
</feature>
<protein>
    <recommendedName>
        <fullName evidence="1">Glutamate-1-semialdehyde 2,1-aminomutase</fullName>
        <shortName evidence="1">GSA</shortName>
        <ecNumber evidence="1">5.4.3.8</ecNumber>
    </recommendedName>
    <alternativeName>
        <fullName evidence="1">Glutamate-1-semialdehyde aminotransferase</fullName>
        <shortName evidence="1">GSA-AT</shortName>
    </alternativeName>
</protein>
<evidence type="ECO:0000255" key="1">
    <source>
        <dbReference type="HAMAP-Rule" id="MF_00375"/>
    </source>
</evidence>
<comment type="catalytic activity">
    <reaction evidence="1">
        <text>(S)-4-amino-5-oxopentanoate = 5-aminolevulinate</text>
        <dbReference type="Rhea" id="RHEA:14265"/>
        <dbReference type="ChEBI" id="CHEBI:57501"/>
        <dbReference type="ChEBI" id="CHEBI:356416"/>
        <dbReference type="EC" id="5.4.3.8"/>
    </reaction>
</comment>
<comment type="cofactor">
    <cofactor evidence="1">
        <name>pyridoxal 5'-phosphate</name>
        <dbReference type="ChEBI" id="CHEBI:597326"/>
    </cofactor>
</comment>
<comment type="pathway">
    <text evidence="1">Porphyrin-containing compound metabolism; protoporphyrin-IX biosynthesis; 5-aminolevulinate from L-glutamyl-tRNA(Glu): step 2/2.</text>
</comment>
<comment type="subunit">
    <text evidence="1">Homodimer.</text>
</comment>
<comment type="subcellular location">
    <subcellularLocation>
        <location evidence="1">Cytoplasm</location>
    </subcellularLocation>
</comment>
<comment type="similarity">
    <text evidence="1">Belongs to the class-III pyridoxal-phosphate-dependent aminotransferase family. HemL subfamily.</text>
</comment>